<protein>
    <recommendedName>
        <fullName evidence="1">CCA-adding enzyme</fullName>
        <ecNumber evidence="1">2.7.7.72</ecNumber>
    </recommendedName>
    <alternativeName>
        <fullName evidence="1">CCA tRNA nucleotidyltransferase</fullName>
    </alternativeName>
    <alternativeName>
        <fullName evidence="1">tRNA CCA-pyrophosphorylase</fullName>
    </alternativeName>
    <alternativeName>
        <fullName evidence="1">tRNA adenylyl-/cytidylyl- transferase</fullName>
    </alternativeName>
    <alternativeName>
        <fullName evidence="1">tRNA nucleotidyltransferase</fullName>
    </alternativeName>
    <alternativeName>
        <fullName evidence="1">tRNA-NT</fullName>
    </alternativeName>
</protein>
<gene>
    <name evidence="1" type="primary">cca</name>
    <name type="ordered locus">YG5714_1178</name>
</gene>
<reference key="1">
    <citation type="journal article" date="2009" name="Proc. Natl. Acad. Sci. U.S.A.">
        <title>Biogeography of the Sulfolobus islandicus pan-genome.</title>
        <authorList>
            <person name="Reno M.L."/>
            <person name="Held N.L."/>
            <person name="Fields C.J."/>
            <person name="Burke P.V."/>
            <person name="Whitaker R.J."/>
        </authorList>
    </citation>
    <scope>NUCLEOTIDE SEQUENCE [LARGE SCALE GENOMIC DNA]</scope>
    <source>
        <strain>Y.G.57.14 / Yellowstone #1</strain>
    </source>
</reference>
<name>CCA_SACI7</name>
<accession>C3NDQ6</accession>
<comment type="function">
    <text evidence="1">Catalyzes the addition and repair of the essential 3'-terminal CCA sequence in tRNAs without using a nucleic acid template. Adds these three nucleotides in the order of C, C, and A to the tRNA nucleotide-73, using CTP and ATP as substrates and producing inorganic pyrophosphate. tRNA 3'-terminal CCA addition is required both for tRNA processing and repair. Also involved in tRNA surveillance by mediating tandem CCA addition to generate a CCACCA at the 3' terminus of unstable tRNAs. While stable tRNAs receive only 3'-terminal CCA, unstable tRNAs are marked with CCACCA and rapidly degraded.</text>
</comment>
<comment type="catalytic activity">
    <reaction evidence="1">
        <text>a tRNA precursor + 2 CTP + ATP = a tRNA with a 3' CCA end + 3 diphosphate</text>
        <dbReference type="Rhea" id="RHEA:14433"/>
        <dbReference type="Rhea" id="RHEA-COMP:10465"/>
        <dbReference type="Rhea" id="RHEA-COMP:10468"/>
        <dbReference type="ChEBI" id="CHEBI:30616"/>
        <dbReference type="ChEBI" id="CHEBI:33019"/>
        <dbReference type="ChEBI" id="CHEBI:37563"/>
        <dbReference type="ChEBI" id="CHEBI:74896"/>
        <dbReference type="ChEBI" id="CHEBI:83071"/>
        <dbReference type="EC" id="2.7.7.72"/>
    </reaction>
</comment>
<comment type="catalytic activity">
    <reaction evidence="1">
        <text>a tRNA with a 3' CCA end + 2 CTP + ATP = a tRNA with a 3' CCACCA end + 3 diphosphate</text>
        <dbReference type="Rhea" id="RHEA:76235"/>
        <dbReference type="Rhea" id="RHEA-COMP:10468"/>
        <dbReference type="Rhea" id="RHEA-COMP:18655"/>
        <dbReference type="ChEBI" id="CHEBI:30616"/>
        <dbReference type="ChEBI" id="CHEBI:33019"/>
        <dbReference type="ChEBI" id="CHEBI:37563"/>
        <dbReference type="ChEBI" id="CHEBI:83071"/>
        <dbReference type="ChEBI" id="CHEBI:195187"/>
    </reaction>
    <physiologicalReaction direction="left-to-right" evidence="1">
        <dbReference type="Rhea" id="RHEA:76236"/>
    </physiologicalReaction>
</comment>
<comment type="cofactor">
    <cofactor evidence="1">
        <name>Mg(2+)</name>
        <dbReference type="ChEBI" id="CHEBI:18420"/>
    </cofactor>
</comment>
<comment type="subunit">
    <text evidence="1">Homodimer.</text>
</comment>
<comment type="miscellaneous">
    <text evidence="1">A single active site specifically recognizes both ATP and CTP and is responsible for their addition.</text>
</comment>
<comment type="similarity">
    <text evidence="1">Belongs to the tRNA nucleotidyltransferase/poly(A) polymerase family. Archaeal CCA-adding enzyme subfamily.</text>
</comment>
<feature type="chain" id="PRO_1000214145" description="CCA-adding enzyme">
    <location>
        <begin position="1"/>
        <end position="412"/>
    </location>
</feature>
<feature type="binding site" evidence="1">
    <location>
        <position position="41"/>
    </location>
    <ligand>
        <name>ATP</name>
        <dbReference type="ChEBI" id="CHEBI:30616"/>
    </ligand>
</feature>
<feature type="binding site" evidence="1">
    <location>
        <position position="41"/>
    </location>
    <ligand>
        <name>CTP</name>
        <dbReference type="ChEBI" id="CHEBI:37563"/>
    </ligand>
</feature>
<feature type="binding site" evidence="1">
    <location>
        <position position="44"/>
    </location>
    <ligand>
        <name>ATP</name>
        <dbReference type="ChEBI" id="CHEBI:30616"/>
    </ligand>
</feature>
<feature type="binding site" evidence="1">
    <location>
        <position position="44"/>
    </location>
    <ligand>
        <name>CTP</name>
        <dbReference type="ChEBI" id="CHEBI:37563"/>
    </ligand>
</feature>
<feature type="binding site" evidence="1">
    <location>
        <position position="53"/>
    </location>
    <ligand>
        <name>Mg(2+)</name>
        <dbReference type="ChEBI" id="CHEBI:18420"/>
    </ligand>
</feature>
<feature type="binding site" evidence="1">
    <location>
        <position position="55"/>
    </location>
    <ligand>
        <name>Mg(2+)</name>
        <dbReference type="ChEBI" id="CHEBI:18420"/>
    </ligand>
</feature>
<feature type="binding site" evidence="1">
    <location>
        <position position="106"/>
    </location>
    <ligand>
        <name>Mg(2+)</name>
        <dbReference type="ChEBI" id="CHEBI:18420"/>
    </ligand>
</feature>
<feature type="binding site" evidence="1">
    <location>
        <position position="129"/>
    </location>
    <ligand>
        <name>ATP</name>
        <dbReference type="ChEBI" id="CHEBI:30616"/>
    </ligand>
</feature>
<feature type="binding site" evidence="1">
    <location>
        <position position="129"/>
    </location>
    <ligand>
        <name>CTP</name>
        <dbReference type="ChEBI" id="CHEBI:37563"/>
    </ligand>
</feature>
<feature type="binding site" evidence="1">
    <location>
        <position position="149"/>
    </location>
    <ligand>
        <name>ATP</name>
        <dbReference type="ChEBI" id="CHEBI:30616"/>
    </ligand>
</feature>
<feature type="binding site" evidence="1">
    <location>
        <position position="149"/>
    </location>
    <ligand>
        <name>CTP</name>
        <dbReference type="ChEBI" id="CHEBI:37563"/>
    </ligand>
</feature>
<feature type="binding site" evidence="1">
    <location>
        <position position="158"/>
    </location>
    <ligand>
        <name>ATP</name>
        <dbReference type="ChEBI" id="CHEBI:30616"/>
    </ligand>
</feature>
<feature type="binding site" evidence="1">
    <location>
        <position position="158"/>
    </location>
    <ligand>
        <name>CTP</name>
        <dbReference type="ChEBI" id="CHEBI:37563"/>
    </ligand>
</feature>
<keyword id="KW-0067">ATP-binding</keyword>
<keyword id="KW-0460">Magnesium</keyword>
<keyword id="KW-0479">Metal-binding</keyword>
<keyword id="KW-0547">Nucleotide-binding</keyword>
<keyword id="KW-0548">Nucleotidyltransferase</keyword>
<keyword id="KW-0692">RNA repair</keyword>
<keyword id="KW-0694">RNA-binding</keyword>
<keyword id="KW-0808">Transferase</keyword>
<keyword id="KW-0819">tRNA processing</keyword>
<evidence type="ECO:0000255" key="1">
    <source>
        <dbReference type="HAMAP-Rule" id="MF_01264"/>
    </source>
</evidence>
<proteinExistence type="inferred from homology"/>
<dbReference type="EC" id="2.7.7.72" evidence="1"/>
<dbReference type="EMBL" id="CP001403">
    <property type="protein sequence ID" value="ACP45445.1"/>
    <property type="molecule type" value="Genomic_DNA"/>
</dbReference>
<dbReference type="RefSeq" id="WP_012716101.1">
    <property type="nucleotide sequence ID" value="NC_012622.1"/>
</dbReference>
<dbReference type="SMR" id="C3NDQ6"/>
<dbReference type="GeneID" id="7806876"/>
<dbReference type="KEGG" id="siy:YG5714_1178"/>
<dbReference type="HOGENOM" id="CLU_044679_1_0_2"/>
<dbReference type="Proteomes" id="UP000002308">
    <property type="component" value="Chromosome"/>
</dbReference>
<dbReference type="GO" id="GO:0005524">
    <property type="term" value="F:ATP binding"/>
    <property type="evidence" value="ECO:0007669"/>
    <property type="project" value="UniProtKB-UniRule"/>
</dbReference>
<dbReference type="GO" id="GO:0004810">
    <property type="term" value="F:CCA tRNA nucleotidyltransferase activity"/>
    <property type="evidence" value="ECO:0007669"/>
    <property type="project" value="UniProtKB-UniRule"/>
</dbReference>
<dbReference type="GO" id="GO:0000287">
    <property type="term" value="F:magnesium ion binding"/>
    <property type="evidence" value="ECO:0007669"/>
    <property type="project" value="UniProtKB-UniRule"/>
</dbReference>
<dbReference type="GO" id="GO:0000049">
    <property type="term" value="F:tRNA binding"/>
    <property type="evidence" value="ECO:0007669"/>
    <property type="project" value="UniProtKB-UniRule"/>
</dbReference>
<dbReference type="GO" id="GO:0042245">
    <property type="term" value="P:RNA repair"/>
    <property type="evidence" value="ECO:0007669"/>
    <property type="project" value="UniProtKB-KW"/>
</dbReference>
<dbReference type="GO" id="GO:0001680">
    <property type="term" value="P:tRNA 3'-terminal CCA addition"/>
    <property type="evidence" value="ECO:0007669"/>
    <property type="project" value="UniProtKB-UniRule"/>
</dbReference>
<dbReference type="CDD" id="cd05400">
    <property type="entry name" value="NT_2-5OAS_ClassI-CCAase"/>
    <property type="match status" value="1"/>
</dbReference>
<dbReference type="Gene3D" id="3.30.460.10">
    <property type="entry name" value="Beta Polymerase, domain 2"/>
    <property type="match status" value="1"/>
</dbReference>
<dbReference type="Gene3D" id="1.10.1410.30">
    <property type="entry name" value="CCA tRNA nucleotidyltransferase, domain 2"/>
    <property type="match status" value="1"/>
</dbReference>
<dbReference type="Gene3D" id="3.30.70.590">
    <property type="entry name" value="Poly(A) polymerase predicted RNA binding domain"/>
    <property type="match status" value="1"/>
</dbReference>
<dbReference type="HAMAP" id="MF_01264">
    <property type="entry name" value="CCA_arch"/>
    <property type="match status" value="1"/>
</dbReference>
<dbReference type="InterPro" id="IPR048833">
    <property type="entry name" value="CAA_C"/>
</dbReference>
<dbReference type="InterPro" id="IPR008229">
    <property type="entry name" value="CCA-adding_arc"/>
</dbReference>
<dbReference type="InterPro" id="IPR042090">
    <property type="entry name" value="CCA_tRNA_nucleotrans_2"/>
</dbReference>
<dbReference type="InterPro" id="IPR006116">
    <property type="entry name" value="NT_2-5OAS_ClassI-CCAase"/>
</dbReference>
<dbReference type="InterPro" id="IPR043519">
    <property type="entry name" value="NT_sf"/>
</dbReference>
<dbReference type="InterPro" id="IPR011068">
    <property type="entry name" value="NuclTrfase_I-like_C"/>
</dbReference>
<dbReference type="InterPro" id="IPR002934">
    <property type="entry name" value="Polymerase_NTP_transf_dom"/>
</dbReference>
<dbReference type="InterPro" id="IPR015329">
    <property type="entry name" value="tRNA_NucTransf2"/>
</dbReference>
<dbReference type="NCBIfam" id="TIGR03671">
    <property type="entry name" value="cca_archaeal"/>
    <property type="match status" value="1"/>
</dbReference>
<dbReference type="PANTHER" id="PTHR39643">
    <property type="entry name" value="CCA-ADDING ENZYME"/>
    <property type="match status" value="1"/>
</dbReference>
<dbReference type="PANTHER" id="PTHR39643:SF1">
    <property type="entry name" value="CCA-ADDING ENZYME"/>
    <property type="match status" value="1"/>
</dbReference>
<dbReference type="Pfam" id="PF21133">
    <property type="entry name" value="CAA_C"/>
    <property type="match status" value="1"/>
</dbReference>
<dbReference type="Pfam" id="PF01909">
    <property type="entry name" value="NTP_transf_2"/>
    <property type="match status" value="1"/>
</dbReference>
<dbReference type="Pfam" id="PF09249">
    <property type="entry name" value="tRNA_NucTransf2"/>
    <property type="match status" value="1"/>
</dbReference>
<dbReference type="PIRSF" id="PIRSF005335">
    <property type="entry name" value="CCA_arch"/>
    <property type="match status" value="1"/>
</dbReference>
<dbReference type="SUPFAM" id="SSF81301">
    <property type="entry name" value="Nucleotidyltransferase"/>
    <property type="match status" value="1"/>
</dbReference>
<dbReference type="SUPFAM" id="SSF55003">
    <property type="entry name" value="PAP/Archaeal CCA-adding enzyme, C-terminal domain"/>
    <property type="match status" value="1"/>
</dbReference>
<dbReference type="SUPFAM" id="SSF81631">
    <property type="entry name" value="PAP/OAS1 substrate-binding domain"/>
    <property type="match status" value="1"/>
</dbReference>
<organism>
    <name type="scientific">Saccharolobus islandicus (strain Y.G.57.14 / Yellowstone #1)</name>
    <name type="common">Sulfolobus islandicus</name>
    <dbReference type="NCBI Taxonomy" id="439386"/>
    <lineage>
        <taxon>Archaea</taxon>
        <taxon>Thermoproteota</taxon>
        <taxon>Thermoprotei</taxon>
        <taxon>Sulfolobales</taxon>
        <taxon>Sulfolobaceae</taxon>
        <taxon>Saccharolobus</taxon>
    </lineage>
</organism>
<sequence length="412" mass="48064">MIEEEILKIIKPTEEDKKGIEKVLEIIRERLNKLDFEVEGSFRKGTWLRQDTDIDVFVFYPKDVGKEYLERNALNDIINRIKDLDYTLAYAEHPYVIVNINNVEVDIVPALRVESGDKAITAVDRTPFHTKYVTSHLDERGKDEVRLLKRFMKGIGVYGAELKVQGFSGYATELLIIYYGNFRKVLEEASKWKHPIKIELTKPMKIFSEPLIIPDPVDPKRNVTAAVSLKNIATFSIAAKYYLKNPSIEFFFPSKKVEEKVKGDVLILRLNLDEKSSEDIVWGQIKRSVNKIERALKQYGFRVIDVQAWGDTNNITIAVQLESKNIGQYYLNIGPQYYSETIEDFIQKNDNIWVGEDGRLYSIKERKEYDAETIAKKNIVLKVKYNIESYWLQNKEDQQIMKFLRKTPTWLK</sequence>